<protein>
    <recommendedName>
        <fullName>PiggyBac transposable element-derived protein 3</fullName>
    </recommendedName>
</protein>
<reference key="1">
    <citation type="journal article" date="2004" name="Nat. Genet.">
        <title>Complete sequencing and characterization of 21,243 full-length human cDNAs.</title>
        <authorList>
            <person name="Ota T."/>
            <person name="Suzuki Y."/>
            <person name="Nishikawa T."/>
            <person name="Otsuki T."/>
            <person name="Sugiyama T."/>
            <person name="Irie R."/>
            <person name="Wakamatsu A."/>
            <person name="Hayashi K."/>
            <person name="Sato H."/>
            <person name="Nagai K."/>
            <person name="Kimura K."/>
            <person name="Makita H."/>
            <person name="Sekine M."/>
            <person name="Obayashi M."/>
            <person name="Nishi T."/>
            <person name="Shibahara T."/>
            <person name="Tanaka T."/>
            <person name="Ishii S."/>
            <person name="Yamamoto J."/>
            <person name="Saito K."/>
            <person name="Kawai Y."/>
            <person name="Isono Y."/>
            <person name="Nakamura Y."/>
            <person name="Nagahari K."/>
            <person name="Murakami K."/>
            <person name="Yasuda T."/>
            <person name="Iwayanagi T."/>
            <person name="Wagatsuma M."/>
            <person name="Shiratori A."/>
            <person name="Sudo H."/>
            <person name="Hosoiri T."/>
            <person name="Kaku Y."/>
            <person name="Kodaira H."/>
            <person name="Kondo H."/>
            <person name="Sugawara M."/>
            <person name="Takahashi M."/>
            <person name="Kanda K."/>
            <person name="Yokoi T."/>
            <person name="Furuya T."/>
            <person name="Kikkawa E."/>
            <person name="Omura Y."/>
            <person name="Abe K."/>
            <person name="Kamihara K."/>
            <person name="Katsuta N."/>
            <person name="Sato K."/>
            <person name="Tanikawa M."/>
            <person name="Yamazaki M."/>
            <person name="Ninomiya K."/>
            <person name="Ishibashi T."/>
            <person name="Yamashita H."/>
            <person name="Murakawa K."/>
            <person name="Fujimori K."/>
            <person name="Tanai H."/>
            <person name="Kimata M."/>
            <person name="Watanabe M."/>
            <person name="Hiraoka S."/>
            <person name="Chiba Y."/>
            <person name="Ishida S."/>
            <person name="Ono Y."/>
            <person name="Takiguchi S."/>
            <person name="Watanabe S."/>
            <person name="Yosida M."/>
            <person name="Hotuta T."/>
            <person name="Kusano J."/>
            <person name="Kanehori K."/>
            <person name="Takahashi-Fujii A."/>
            <person name="Hara H."/>
            <person name="Tanase T.-O."/>
            <person name="Nomura Y."/>
            <person name="Togiya S."/>
            <person name="Komai F."/>
            <person name="Hara R."/>
            <person name="Takeuchi K."/>
            <person name="Arita M."/>
            <person name="Imose N."/>
            <person name="Musashino K."/>
            <person name="Yuuki H."/>
            <person name="Oshima A."/>
            <person name="Sasaki N."/>
            <person name="Aotsuka S."/>
            <person name="Yoshikawa Y."/>
            <person name="Matsunawa H."/>
            <person name="Ichihara T."/>
            <person name="Shiohata N."/>
            <person name="Sano S."/>
            <person name="Moriya S."/>
            <person name="Momiyama H."/>
            <person name="Satoh N."/>
            <person name="Takami S."/>
            <person name="Terashima Y."/>
            <person name="Suzuki O."/>
            <person name="Nakagawa S."/>
            <person name="Senoh A."/>
            <person name="Mizoguchi H."/>
            <person name="Goto Y."/>
            <person name="Shimizu F."/>
            <person name="Wakebe H."/>
            <person name="Hishigaki H."/>
            <person name="Watanabe T."/>
            <person name="Sugiyama A."/>
            <person name="Takemoto M."/>
            <person name="Kawakami B."/>
            <person name="Yamazaki M."/>
            <person name="Watanabe K."/>
            <person name="Kumagai A."/>
            <person name="Itakura S."/>
            <person name="Fukuzumi Y."/>
            <person name="Fujimori Y."/>
            <person name="Komiyama M."/>
            <person name="Tashiro H."/>
            <person name="Tanigami A."/>
            <person name="Fujiwara T."/>
            <person name="Ono T."/>
            <person name="Yamada K."/>
            <person name="Fujii Y."/>
            <person name="Ozaki K."/>
            <person name="Hirao M."/>
            <person name="Ohmori Y."/>
            <person name="Kawabata A."/>
            <person name="Hikiji T."/>
            <person name="Kobatake N."/>
            <person name="Inagaki H."/>
            <person name="Ikema Y."/>
            <person name="Okamoto S."/>
            <person name="Okitani R."/>
            <person name="Kawakami T."/>
            <person name="Noguchi S."/>
            <person name="Itoh T."/>
            <person name="Shigeta K."/>
            <person name="Senba T."/>
            <person name="Matsumura K."/>
            <person name="Nakajima Y."/>
            <person name="Mizuno T."/>
            <person name="Morinaga M."/>
            <person name="Sasaki M."/>
            <person name="Togashi T."/>
            <person name="Oyama M."/>
            <person name="Hata H."/>
            <person name="Watanabe M."/>
            <person name="Komatsu T."/>
            <person name="Mizushima-Sugano J."/>
            <person name="Satoh T."/>
            <person name="Shirai Y."/>
            <person name="Takahashi Y."/>
            <person name="Nakagawa K."/>
            <person name="Okumura K."/>
            <person name="Nagase T."/>
            <person name="Nomura N."/>
            <person name="Kikuchi H."/>
            <person name="Masuho Y."/>
            <person name="Yamashita R."/>
            <person name="Nakai K."/>
            <person name="Yada T."/>
            <person name="Nakamura Y."/>
            <person name="Ohara O."/>
            <person name="Isogai T."/>
            <person name="Sugano S."/>
        </authorList>
    </citation>
    <scope>NUCLEOTIDE SEQUENCE [LARGE SCALE MRNA]</scope>
    <scope>VARIANT LYS-382</scope>
    <source>
        <tissue>Mammary gland</tissue>
    </source>
</reference>
<reference key="2">
    <citation type="journal article" date="2004" name="Nature">
        <title>The DNA sequence and comparative analysis of human chromosome 10.</title>
        <authorList>
            <person name="Deloukas P."/>
            <person name="Earthrowl M.E."/>
            <person name="Grafham D.V."/>
            <person name="Rubenfield M."/>
            <person name="French L."/>
            <person name="Steward C.A."/>
            <person name="Sims S.K."/>
            <person name="Jones M.C."/>
            <person name="Searle S."/>
            <person name="Scott C."/>
            <person name="Howe K."/>
            <person name="Hunt S.E."/>
            <person name="Andrews T.D."/>
            <person name="Gilbert J.G.R."/>
            <person name="Swarbreck D."/>
            <person name="Ashurst J.L."/>
            <person name="Taylor A."/>
            <person name="Battles J."/>
            <person name="Bird C.P."/>
            <person name="Ainscough R."/>
            <person name="Almeida J.P."/>
            <person name="Ashwell R.I.S."/>
            <person name="Ambrose K.D."/>
            <person name="Babbage A.K."/>
            <person name="Bagguley C.L."/>
            <person name="Bailey J."/>
            <person name="Banerjee R."/>
            <person name="Bates K."/>
            <person name="Beasley H."/>
            <person name="Bray-Allen S."/>
            <person name="Brown A.J."/>
            <person name="Brown J.Y."/>
            <person name="Burford D.C."/>
            <person name="Burrill W."/>
            <person name="Burton J."/>
            <person name="Cahill P."/>
            <person name="Camire D."/>
            <person name="Carter N.P."/>
            <person name="Chapman J.C."/>
            <person name="Clark S.Y."/>
            <person name="Clarke G."/>
            <person name="Clee C.M."/>
            <person name="Clegg S."/>
            <person name="Corby N."/>
            <person name="Coulson A."/>
            <person name="Dhami P."/>
            <person name="Dutta I."/>
            <person name="Dunn M."/>
            <person name="Faulkner L."/>
            <person name="Frankish A."/>
            <person name="Frankland J.A."/>
            <person name="Garner P."/>
            <person name="Garnett J."/>
            <person name="Gribble S."/>
            <person name="Griffiths C."/>
            <person name="Grocock R."/>
            <person name="Gustafson E."/>
            <person name="Hammond S."/>
            <person name="Harley J.L."/>
            <person name="Hart E."/>
            <person name="Heath P.D."/>
            <person name="Ho T.P."/>
            <person name="Hopkins B."/>
            <person name="Horne J."/>
            <person name="Howden P.J."/>
            <person name="Huckle E."/>
            <person name="Hynds C."/>
            <person name="Johnson C."/>
            <person name="Johnson D."/>
            <person name="Kana A."/>
            <person name="Kay M."/>
            <person name="Kimberley A.M."/>
            <person name="Kershaw J.K."/>
            <person name="Kokkinaki M."/>
            <person name="Laird G.K."/>
            <person name="Lawlor S."/>
            <person name="Lee H.M."/>
            <person name="Leongamornlert D.A."/>
            <person name="Laird G."/>
            <person name="Lloyd C."/>
            <person name="Lloyd D.M."/>
            <person name="Loveland J."/>
            <person name="Lovell J."/>
            <person name="McLaren S."/>
            <person name="McLay K.E."/>
            <person name="McMurray A."/>
            <person name="Mashreghi-Mohammadi M."/>
            <person name="Matthews L."/>
            <person name="Milne S."/>
            <person name="Nickerson T."/>
            <person name="Nguyen M."/>
            <person name="Overton-Larty E."/>
            <person name="Palmer S.A."/>
            <person name="Pearce A.V."/>
            <person name="Peck A.I."/>
            <person name="Pelan S."/>
            <person name="Phillimore B."/>
            <person name="Porter K."/>
            <person name="Rice C.M."/>
            <person name="Rogosin A."/>
            <person name="Ross M.T."/>
            <person name="Sarafidou T."/>
            <person name="Sehra H.K."/>
            <person name="Shownkeen R."/>
            <person name="Skuce C.D."/>
            <person name="Smith M."/>
            <person name="Standring L."/>
            <person name="Sycamore N."/>
            <person name="Tester J."/>
            <person name="Thorpe A."/>
            <person name="Torcasso W."/>
            <person name="Tracey A."/>
            <person name="Tromans A."/>
            <person name="Tsolas J."/>
            <person name="Wall M."/>
            <person name="Walsh J."/>
            <person name="Wang H."/>
            <person name="Weinstock K."/>
            <person name="West A.P."/>
            <person name="Willey D.L."/>
            <person name="Whitehead S.L."/>
            <person name="Wilming L."/>
            <person name="Wray P.W."/>
            <person name="Young L."/>
            <person name="Chen Y."/>
            <person name="Lovering R.C."/>
            <person name="Moschonas N.K."/>
            <person name="Siebert R."/>
            <person name="Fechtel K."/>
            <person name="Bentley D."/>
            <person name="Durbin R.M."/>
            <person name="Hubbard T."/>
            <person name="Doucette-Stamm L."/>
            <person name="Beck S."/>
            <person name="Smith D.R."/>
            <person name="Rogers J."/>
        </authorList>
    </citation>
    <scope>NUCLEOTIDE SEQUENCE [LARGE SCALE GENOMIC DNA]</scope>
</reference>
<reference key="3">
    <citation type="journal article" date="2004" name="Genome Res.">
        <title>The status, quality, and expansion of the NIH full-length cDNA project: the Mammalian Gene Collection (MGC).</title>
        <authorList>
            <consortium name="The MGC Project Team"/>
        </authorList>
    </citation>
    <scope>NUCLEOTIDE SEQUENCE [LARGE SCALE MRNA]</scope>
    <scope>VARIANT LYS-382</scope>
    <source>
        <tissue>Liver</tissue>
        <tissue>Urinary bladder</tissue>
    </source>
</reference>
<reference key="4">
    <citation type="journal article" date="2008" name="PLoS Genet.">
        <title>An abundant evolutionarily conserved CSB-PiggyBac fusion protein expressed in Cockayne syndrome.</title>
        <authorList>
            <person name="Newman J.C."/>
            <person name="Bailey A.D."/>
            <person name="Fan H.Y."/>
            <person name="Pavelitz T."/>
            <person name="Weiner A.M."/>
        </authorList>
    </citation>
    <scope>ALTERNATIVE SPLICING</scope>
    <scope>MISCELLANEOUS</scope>
</reference>
<reference key="5">
    <citation type="journal article" date="2012" name="DNA Repair">
        <title>The conserved Cockayne syndrome B-piggyBac fusion protein (CSB-PGBD3) affects DNA repair and induces both interferon-like and innate antiviral responses in CSB-null cells.</title>
        <authorList>
            <person name="Bailey A.D."/>
            <person name="Gray L.T."/>
            <person name="Pavelitz T."/>
            <person name="Newman J.C."/>
            <person name="Horibata K."/>
            <person name="Tanaka K."/>
            <person name="Weiner A.M."/>
        </authorList>
    </citation>
    <scope>FUNCTION</scope>
</reference>
<reference key="6">
    <citation type="journal article" date="2013" name="J. Proteome Res.">
        <title>Toward a comprehensive characterization of a human cancer cell phosphoproteome.</title>
        <authorList>
            <person name="Zhou H."/>
            <person name="Di Palma S."/>
            <person name="Preisinger C."/>
            <person name="Peng M."/>
            <person name="Polat A.N."/>
            <person name="Heck A.J."/>
            <person name="Mohammed S."/>
        </authorList>
    </citation>
    <scope>PHOSPHORYLATION [LARGE SCALE ANALYSIS] AT SER-86</scope>
    <scope>IDENTIFICATION BY MASS SPECTROMETRY [LARGE SCALE ANALYSIS]</scope>
    <source>
        <tissue>Cervix carcinoma</tissue>
    </source>
</reference>
<reference key="7">
    <citation type="journal article" date="2015" name="PLoS Genet.">
        <title>CSB-PGBD3 mutations cause premature ovarian failure.</title>
        <authorList>
            <person name="Qin Y."/>
            <person name="Guo T."/>
            <person name="Li G."/>
            <person name="Tang T.S."/>
            <person name="Zhao S."/>
            <person name="Jiao X."/>
            <person name="Gong J."/>
            <person name="Gao F."/>
            <person name="Guo C."/>
            <person name="Simpson J.L."/>
            <person name="Chen Z.J."/>
        </authorList>
    </citation>
    <scope>SUBCELLULAR LOCATION</scope>
    <scope>TISSUE SPECIFICITY</scope>
</reference>
<reference key="8">
    <citation type="journal article" date="2006" name="Science">
        <title>The consensus coding sequences of human breast and colorectal cancers.</title>
        <authorList>
            <person name="Sjoeblom T."/>
            <person name="Jones S."/>
            <person name="Wood L.D."/>
            <person name="Parsons D.W."/>
            <person name="Lin J."/>
            <person name="Barber T.D."/>
            <person name="Mandelker D."/>
            <person name="Leary R.J."/>
            <person name="Ptak J."/>
            <person name="Silliman N."/>
            <person name="Szabo S."/>
            <person name="Buckhaults P."/>
            <person name="Farrell C."/>
            <person name="Meeh P."/>
            <person name="Markowitz S.D."/>
            <person name="Willis J."/>
            <person name="Dawson D."/>
            <person name="Willson J.K.V."/>
            <person name="Gazdar A.F."/>
            <person name="Hartigan J."/>
            <person name="Wu L."/>
            <person name="Liu C."/>
            <person name="Parmigiani G."/>
            <person name="Park B.H."/>
            <person name="Bachman K.E."/>
            <person name="Papadopoulos N."/>
            <person name="Vogelstein B."/>
            <person name="Kinzler K.W."/>
            <person name="Velculescu V.E."/>
        </authorList>
    </citation>
    <scope>VARIANT [LARGE SCALE ANALYSIS] GLY-415</scope>
</reference>
<sequence>MPRTLSLHEITDLLETDDSIEASAIVIQPPENATAPVSDEESGDEEGGTINNLPGSLLHTAAYLIQDGSDAESDSDDPSYAPKDDSPDEVPSTFTVQQPPPSRRRKMTKILCKWKKADLTVQPVAGRVTAPPNDFFTVMRTPTEILELFLDDEVIELIVKYSNLYACSKGVHLGLTSSEFKCFLGIIFLSGYVSVPRRRMFWEQRTDVHNVLVSAAMRRDRFETIFSNLHVADNANLDPVDKFSKLRPLISKLNERCMKFVPNETYFSFDEFMVPYFGRHGCKQFIRGKPIRFGYKFWCGATCLGYICWFQPYQGKNPNTKHEEYGVGASLVLQFSEALTEAHPGQYHFVFNNFFTSIALLDKLSSMGHQATGTVRKDHIDRVPLESDVALKKKERGTFDYRIDGKGNIVCRWNDNSVVTVASSGAGIHPLCLVSRYSQKLKKKIQVQQPNMIKVYNQFMGGVDRADENIDKYRASIRGKKWYSSPLLFCFELVLQNAWQLHKTYDEKPVDFLEFRRRVVCHYLETHGHPPEPGQKGRPQKRNIDSRYDGINHVIVKQGKQTRCAECHKNTTFRCEKCDVALHVKCSVEYHTE</sequence>
<gene>
    <name type="primary">PGBD3</name>
</gene>
<evidence type="ECO:0000256" key="1">
    <source>
        <dbReference type="SAM" id="MobiDB-lite"/>
    </source>
</evidence>
<evidence type="ECO:0000269" key="2">
    <source>
    </source>
</evidence>
<evidence type="ECO:0000269" key="3">
    <source>
    </source>
</evidence>
<evidence type="ECO:0000269" key="4">
    <source>
    </source>
</evidence>
<evidence type="ECO:0000269" key="5">
    <source>
    </source>
</evidence>
<evidence type="ECO:0000269" key="6">
    <source>
    </source>
</evidence>
<evidence type="ECO:0000269" key="7">
    <source>
    </source>
</evidence>
<evidence type="ECO:0000303" key="8">
    <source>
    </source>
</evidence>
<evidence type="ECO:0007744" key="9">
    <source>
    </source>
</evidence>
<dbReference type="EMBL" id="AK074682">
    <property type="protein sequence ID" value="BAG51986.1"/>
    <property type="molecule type" value="mRNA"/>
</dbReference>
<dbReference type="EMBL" id="AL138760">
    <property type="status" value="NOT_ANNOTATED_CDS"/>
    <property type="molecule type" value="Genomic_DNA"/>
</dbReference>
<dbReference type="EMBL" id="BC028954">
    <property type="protein sequence ID" value="AAH28954.2"/>
    <property type="molecule type" value="mRNA"/>
</dbReference>
<dbReference type="EMBL" id="BC063690">
    <property type="protein sequence ID" value="AAH63690.1"/>
    <property type="molecule type" value="mRNA"/>
</dbReference>
<dbReference type="RefSeq" id="NP_736609.2">
    <molecule id="Q8N328-1"/>
    <property type="nucleotide sequence ID" value="NM_170753.3"/>
</dbReference>
<dbReference type="SMR" id="Q8N328"/>
<dbReference type="BioGRID" id="129356">
    <property type="interactions" value="8"/>
</dbReference>
<dbReference type="FunCoup" id="Q8N328">
    <property type="interactions" value="1"/>
</dbReference>
<dbReference type="IntAct" id="Q8N328">
    <property type="interactions" value="2"/>
</dbReference>
<dbReference type="iPTMnet" id="Q8N328"/>
<dbReference type="PhosphoSitePlus" id="Q8N328"/>
<dbReference type="BioMuta" id="HGNC:19400"/>
<dbReference type="DMDM" id="296439278"/>
<dbReference type="jPOST" id="Q8N328"/>
<dbReference type="MassIVE" id="Q8N328"/>
<dbReference type="PaxDb" id="9606-ENSP00000363242"/>
<dbReference type="PeptideAtlas" id="Q8N328"/>
<dbReference type="ProteomicsDB" id="71758"/>
<dbReference type="DNASU" id="267004"/>
<dbReference type="GeneID" id="267004"/>
<dbReference type="KEGG" id="hsa:267004"/>
<dbReference type="UCSC" id="uc057tet.1">
    <molecule id="Q8N328-1"/>
    <property type="organism name" value="human"/>
</dbReference>
<dbReference type="AGR" id="HGNC:19400"/>
<dbReference type="CTD" id="267004"/>
<dbReference type="DisGeNET" id="267004"/>
<dbReference type="GeneCards" id="PGBD3"/>
<dbReference type="HGNC" id="HGNC:19400">
    <property type="gene designation" value="PGBD3"/>
</dbReference>
<dbReference type="MalaCards" id="PGBD3"/>
<dbReference type="MIM" id="609413">
    <property type="type" value="gene"/>
</dbReference>
<dbReference type="neXtProt" id="NX_Q8N328"/>
<dbReference type="PharmGKB" id="PA134927747"/>
<dbReference type="HOGENOM" id="CLU_013052_2_2_1"/>
<dbReference type="InParanoid" id="Q8N328"/>
<dbReference type="PAN-GO" id="Q8N328">
    <property type="GO annotations" value="1 GO annotation based on evolutionary models"/>
</dbReference>
<dbReference type="TreeFam" id="TF328011"/>
<dbReference type="PathwayCommons" id="Q8N328"/>
<dbReference type="SignaLink" id="Q8N328"/>
<dbReference type="BioGRID-ORCS" id="2074">
    <property type="hits" value="26 hits in 1139 CRISPR screens"/>
</dbReference>
<dbReference type="BioGRID-ORCS" id="267004">
    <property type="hits" value="34 hits in 1137 CRISPR screens"/>
</dbReference>
<dbReference type="Pharos" id="Q8N328">
    <property type="development level" value="Tbio"/>
</dbReference>
<dbReference type="PRO" id="PR:Q8N328"/>
<dbReference type="Proteomes" id="UP000005640">
    <property type="component" value="Unplaced"/>
</dbReference>
<dbReference type="RNAct" id="Q8N328">
    <property type="molecule type" value="protein"/>
</dbReference>
<dbReference type="GO" id="GO:0005634">
    <property type="term" value="C:nucleus"/>
    <property type="evidence" value="ECO:0007669"/>
    <property type="project" value="UniProtKB-SubCell"/>
</dbReference>
<dbReference type="GO" id="GO:0043565">
    <property type="term" value="F:sequence-specific DNA binding"/>
    <property type="evidence" value="ECO:0000314"/>
    <property type="project" value="UniProtKB"/>
</dbReference>
<dbReference type="InterPro" id="IPR029526">
    <property type="entry name" value="PGBD"/>
</dbReference>
<dbReference type="InterPro" id="IPR052638">
    <property type="entry name" value="PiggyBac_TE-derived"/>
</dbReference>
<dbReference type="PANTHER" id="PTHR47055">
    <property type="entry name" value="DDE_TNP_1_7 DOMAIN-CONTAINING PROTEIN"/>
    <property type="match status" value="1"/>
</dbReference>
<dbReference type="PANTHER" id="PTHR47055:SF2">
    <property type="entry name" value="PIGGYBAC TRANSPOSABLE ELEMENT-DERIVED PROTEIN 2-RELATED"/>
    <property type="match status" value="1"/>
</dbReference>
<dbReference type="Pfam" id="PF13843">
    <property type="entry name" value="DDE_Tnp_1_7"/>
    <property type="match status" value="1"/>
</dbReference>
<proteinExistence type="evidence at protein level"/>
<organism>
    <name type="scientific">Homo sapiens</name>
    <name type="common">Human</name>
    <dbReference type="NCBI Taxonomy" id="9606"/>
    <lineage>
        <taxon>Eukaryota</taxon>
        <taxon>Metazoa</taxon>
        <taxon>Chordata</taxon>
        <taxon>Craniata</taxon>
        <taxon>Vertebrata</taxon>
        <taxon>Euteleostomi</taxon>
        <taxon>Mammalia</taxon>
        <taxon>Eutheria</taxon>
        <taxon>Euarchontoglires</taxon>
        <taxon>Primates</taxon>
        <taxon>Haplorrhini</taxon>
        <taxon>Catarrhini</taxon>
        <taxon>Hominidae</taxon>
        <taxon>Homo</taxon>
    </lineage>
</organism>
<accession>Q8N328</accession>
<accession>B3KQC4</accession>
<accession>Q5W0M0</accession>
<accession>Q6PIH0</accession>
<comment type="function">
    <text evidence="6">Binds in vitro to PGBD3-related transposable elements, called MER85s; these non-autonomous 140 bp elements are characterized by the presence of PGBD3 terminal inverted repeats and the absence of internal transposase ORF.</text>
</comment>
<comment type="subcellular location">
    <subcellularLocation>
        <location evidence="7">Nucleus</location>
    </subcellularLocation>
</comment>
<comment type="alternative products">
    <event type="alternative splicing"/>
    <isoform>
        <id>Q8N328-1</id>
        <name>PGBD3</name>
        <sequence type="displayed"/>
    </isoform>
    <isoform>
        <id>P0DP91-1</id>
        <id>Q03468-2</id>
        <name evidence="8">CSB-PGBD3</name>
        <sequence type="external"/>
    </isoform>
</comment>
<comment type="tissue specificity">
    <text evidence="7">Expressed in heart and oocytes, but not in granulosa cells (at protein level).</text>
</comment>
<comment type="miscellaneous">
    <text evidence="5">PGBD3 gene is located within ERCC6 intron 5.</text>
</comment>
<keyword id="KW-0025">Alternative splicing</keyword>
<keyword id="KW-0238">DNA-binding</keyword>
<keyword id="KW-0539">Nucleus</keyword>
<keyword id="KW-0597">Phosphoprotein</keyword>
<keyword id="KW-1185">Reference proteome</keyword>
<feature type="chain" id="PRO_0000288054" description="PiggyBac transposable element-derived protein 3">
    <location>
        <begin position="1"/>
        <end position="593"/>
    </location>
</feature>
<feature type="region of interest" description="Disordered" evidence="1">
    <location>
        <begin position="27"/>
        <end position="53"/>
    </location>
</feature>
<feature type="region of interest" description="Disordered" evidence="1">
    <location>
        <begin position="69"/>
        <end position="105"/>
    </location>
</feature>
<feature type="compositionally biased region" description="Acidic residues" evidence="1">
    <location>
        <begin position="38"/>
        <end position="47"/>
    </location>
</feature>
<feature type="modified residue" description="Phosphoserine" evidence="9">
    <location>
        <position position="86"/>
    </location>
</feature>
<feature type="sequence variant" id="VAR_032391" description="In dbSNP:rs4253072." evidence="2 3">
    <original>R</original>
    <variation>K</variation>
    <location>
        <position position="382"/>
    </location>
</feature>
<feature type="sequence variant" id="VAR_035621" description="In a breast cancer sample; somatic mutation." evidence="4">
    <original>D</original>
    <variation>G</variation>
    <location>
        <position position="415"/>
    </location>
</feature>
<feature type="sequence variant" id="VAR_051274" description="In dbSNP:rs11101143.">
    <original>Q</original>
    <variation>E</variation>
    <location>
        <position position="446"/>
    </location>
</feature>
<name>PGBD3_HUMAN</name>